<dbReference type="EMBL" id="AE008922">
    <property type="protein sequence ID" value="AAM40214.1"/>
    <property type="molecule type" value="Genomic_DNA"/>
</dbReference>
<dbReference type="RefSeq" id="NP_636290.1">
    <property type="nucleotide sequence ID" value="NC_003902.1"/>
</dbReference>
<dbReference type="RefSeq" id="WP_011036129.1">
    <property type="nucleotide sequence ID" value="NC_003902.1"/>
</dbReference>
<dbReference type="SMR" id="Q8PC41"/>
<dbReference type="STRING" id="190485.XCC0904"/>
<dbReference type="EnsemblBacteria" id="AAM40214">
    <property type="protein sequence ID" value="AAM40214"/>
    <property type="gene ID" value="XCC0904"/>
</dbReference>
<dbReference type="GeneID" id="58014520"/>
<dbReference type="KEGG" id="xcc:XCC0904"/>
<dbReference type="PATRIC" id="fig|190485.4.peg.976"/>
<dbReference type="eggNOG" id="COG0186">
    <property type="taxonomic scope" value="Bacteria"/>
</dbReference>
<dbReference type="HOGENOM" id="CLU_073626_1_1_6"/>
<dbReference type="OrthoDB" id="9811714at2"/>
<dbReference type="Proteomes" id="UP000001010">
    <property type="component" value="Chromosome"/>
</dbReference>
<dbReference type="GO" id="GO:0022627">
    <property type="term" value="C:cytosolic small ribosomal subunit"/>
    <property type="evidence" value="ECO:0000318"/>
    <property type="project" value="GO_Central"/>
</dbReference>
<dbReference type="GO" id="GO:0019843">
    <property type="term" value="F:rRNA binding"/>
    <property type="evidence" value="ECO:0007669"/>
    <property type="project" value="UniProtKB-UniRule"/>
</dbReference>
<dbReference type="GO" id="GO:0003735">
    <property type="term" value="F:structural constituent of ribosome"/>
    <property type="evidence" value="ECO:0000318"/>
    <property type="project" value="GO_Central"/>
</dbReference>
<dbReference type="GO" id="GO:0006412">
    <property type="term" value="P:translation"/>
    <property type="evidence" value="ECO:0007669"/>
    <property type="project" value="UniProtKB-UniRule"/>
</dbReference>
<dbReference type="CDD" id="cd00364">
    <property type="entry name" value="Ribosomal_uS17"/>
    <property type="match status" value="1"/>
</dbReference>
<dbReference type="FunFam" id="2.40.50.140:FF:000204">
    <property type="entry name" value="30S ribosomal protein S17"/>
    <property type="match status" value="1"/>
</dbReference>
<dbReference type="Gene3D" id="2.40.50.140">
    <property type="entry name" value="Nucleic acid-binding proteins"/>
    <property type="match status" value="1"/>
</dbReference>
<dbReference type="HAMAP" id="MF_01345_B">
    <property type="entry name" value="Ribosomal_uS17_B"/>
    <property type="match status" value="1"/>
</dbReference>
<dbReference type="InterPro" id="IPR012340">
    <property type="entry name" value="NA-bd_OB-fold"/>
</dbReference>
<dbReference type="InterPro" id="IPR000266">
    <property type="entry name" value="Ribosomal_uS17"/>
</dbReference>
<dbReference type="InterPro" id="IPR019984">
    <property type="entry name" value="Ribosomal_uS17_bact/chlr"/>
</dbReference>
<dbReference type="NCBIfam" id="NF004123">
    <property type="entry name" value="PRK05610.1"/>
    <property type="match status" value="1"/>
</dbReference>
<dbReference type="NCBIfam" id="TIGR03635">
    <property type="entry name" value="uS17_bact"/>
    <property type="match status" value="1"/>
</dbReference>
<dbReference type="PANTHER" id="PTHR10744">
    <property type="entry name" value="40S RIBOSOMAL PROTEIN S11 FAMILY MEMBER"/>
    <property type="match status" value="1"/>
</dbReference>
<dbReference type="PANTHER" id="PTHR10744:SF1">
    <property type="entry name" value="SMALL RIBOSOMAL SUBUNIT PROTEIN US17M"/>
    <property type="match status" value="1"/>
</dbReference>
<dbReference type="Pfam" id="PF00366">
    <property type="entry name" value="Ribosomal_S17"/>
    <property type="match status" value="1"/>
</dbReference>
<dbReference type="PRINTS" id="PR00973">
    <property type="entry name" value="RIBOSOMALS17"/>
</dbReference>
<dbReference type="SUPFAM" id="SSF50249">
    <property type="entry name" value="Nucleic acid-binding proteins"/>
    <property type="match status" value="1"/>
</dbReference>
<name>RS17_XANCP</name>
<sequence>MSDNNEKQTLRTVEGRVVSNKMDKTVTVLVERQVKHPLYGKYIKRSSKLHAHDADNACNEGDVVRVTEIAPMSKTKNWRVVEIVTRAAV</sequence>
<gene>
    <name evidence="1" type="primary">rpsQ</name>
    <name type="ordered locus">XCC0904</name>
</gene>
<proteinExistence type="inferred from homology"/>
<evidence type="ECO:0000255" key="1">
    <source>
        <dbReference type="HAMAP-Rule" id="MF_01345"/>
    </source>
</evidence>
<evidence type="ECO:0000305" key="2"/>
<accession>Q8PC41</accession>
<reference key="1">
    <citation type="journal article" date="2002" name="Nature">
        <title>Comparison of the genomes of two Xanthomonas pathogens with differing host specificities.</title>
        <authorList>
            <person name="da Silva A.C.R."/>
            <person name="Ferro J.A."/>
            <person name="Reinach F.C."/>
            <person name="Farah C.S."/>
            <person name="Furlan L.R."/>
            <person name="Quaggio R.B."/>
            <person name="Monteiro-Vitorello C.B."/>
            <person name="Van Sluys M.A."/>
            <person name="Almeida N.F. Jr."/>
            <person name="Alves L.M.C."/>
            <person name="do Amaral A.M."/>
            <person name="Bertolini M.C."/>
            <person name="Camargo L.E.A."/>
            <person name="Camarotte G."/>
            <person name="Cannavan F."/>
            <person name="Cardozo J."/>
            <person name="Chambergo F."/>
            <person name="Ciapina L.P."/>
            <person name="Cicarelli R.M.B."/>
            <person name="Coutinho L.L."/>
            <person name="Cursino-Santos J.R."/>
            <person name="El-Dorry H."/>
            <person name="Faria J.B."/>
            <person name="Ferreira A.J.S."/>
            <person name="Ferreira R.C.C."/>
            <person name="Ferro M.I.T."/>
            <person name="Formighieri E.F."/>
            <person name="Franco M.C."/>
            <person name="Greggio C.C."/>
            <person name="Gruber A."/>
            <person name="Katsuyama A.M."/>
            <person name="Kishi L.T."/>
            <person name="Leite R.P."/>
            <person name="Lemos E.G.M."/>
            <person name="Lemos M.V.F."/>
            <person name="Locali E.C."/>
            <person name="Machado M.A."/>
            <person name="Madeira A.M.B.N."/>
            <person name="Martinez-Rossi N.M."/>
            <person name="Martins E.C."/>
            <person name="Meidanis J."/>
            <person name="Menck C.F.M."/>
            <person name="Miyaki C.Y."/>
            <person name="Moon D.H."/>
            <person name="Moreira L.M."/>
            <person name="Novo M.T.M."/>
            <person name="Okura V.K."/>
            <person name="Oliveira M.C."/>
            <person name="Oliveira V.R."/>
            <person name="Pereira H.A."/>
            <person name="Rossi A."/>
            <person name="Sena J.A.D."/>
            <person name="Silva C."/>
            <person name="de Souza R.F."/>
            <person name="Spinola L.A.F."/>
            <person name="Takita M.A."/>
            <person name="Tamura R.E."/>
            <person name="Teixeira E.C."/>
            <person name="Tezza R.I.D."/>
            <person name="Trindade dos Santos M."/>
            <person name="Truffi D."/>
            <person name="Tsai S.M."/>
            <person name="White F.F."/>
            <person name="Setubal J.C."/>
            <person name="Kitajima J.P."/>
        </authorList>
    </citation>
    <scope>NUCLEOTIDE SEQUENCE [LARGE SCALE GENOMIC DNA]</scope>
    <source>
        <strain>ATCC 33913 / DSM 3586 / NCPPB 528 / LMG 568 / P 25</strain>
    </source>
</reference>
<comment type="function">
    <text evidence="1">One of the primary rRNA binding proteins, it binds specifically to the 5'-end of 16S ribosomal RNA.</text>
</comment>
<comment type="subunit">
    <text evidence="1">Part of the 30S ribosomal subunit.</text>
</comment>
<comment type="similarity">
    <text evidence="1">Belongs to the universal ribosomal protein uS17 family.</text>
</comment>
<protein>
    <recommendedName>
        <fullName evidence="1">Small ribosomal subunit protein uS17</fullName>
    </recommendedName>
    <alternativeName>
        <fullName evidence="2">30S ribosomal protein S17</fullName>
    </alternativeName>
</protein>
<organism>
    <name type="scientific">Xanthomonas campestris pv. campestris (strain ATCC 33913 / DSM 3586 / NCPPB 528 / LMG 568 / P 25)</name>
    <dbReference type="NCBI Taxonomy" id="190485"/>
    <lineage>
        <taxon>Bacteria</taxon>
        <taxon>Pseudomonadati</taxon>
        <taxon>Pseudomonadota</taxon>
        <taxon>Gammaproteobacteria</taxon>
        <taxon>Lysobacterales</taxon>
        <taxon>Lysobacteraceae</taxon>
        <taxon>Xanthomonas</taxon>
    </lineage>
</organism>
<feature type="chain" id="PRO_0000233613" description="Small ribosomal subunit protein uS17">
    <location>
        <begin position="1"/>
        <end position="89"/>
    </location>
</feature>
<keyword id="KW-1185">Reference proteome</keyword>
<keyword id="KW-0687">Ribonucleoprotein</keyword>
<keyword id="KW-0689">Ribosomal protein</keyword>
<keyword id="KW-0694">RNA-binding</keyword>
<keyword id="KW-0699">rRNA-binding</keyword>